<protein>
    <recommendedName>
        <fullName evidence="1">Large ribosomal subunit protein bL28</fullName>
    </recommendedName>
    <alternativeName>
        <fullName evidence="2">50S ribosomal protein L28</fullName>
    </alternativeName>
</protein>
<name>RL28_ACIET</name>
<evidence type="ECO:0000255" key="1">
    <source>
        <dbReference type="HAMAP-Rule" id="MF_00373"/>
    </source>
</evidence>
<evidence type="ECO:0000305" key="2"/>
<organism>
    <name type="scientific">Acidovorax ebreus (strain TPSY)</name>
    <name type="common">Diaphorobacter sp. (strain TPSY)</name>
    <dbReference type="NCBI Taxonomy" id="535289"/>
    <lineage>
        <taxon>Bacteria</taxon>
        <taxon>Pseudomonadati</taxon>
        <taxon>Pseudomonadota</taxon>
        <taxon>Betaproteobacteria</taxon>
        <taxon>Burkholderiales</taxon>
        <taxon>Comamonadaceae</taxon>
        <taxon>Diaphorobacter</taxon>
    </lineage>
</organism>
<proteinExistence type="inferred from homology"/>
<gene>
    <name evidence="1" type="primary">rpmB</name>
    <name type="ordered locus">Dtpsy_2722</name>
</gene>
<dbReference type="EMBL" id="CP001392">
    <property type="protein sequence ID" value="ACM34156.1"/>
    <property type="molecule type" value="Genomic_DNA"/>
</dbReference>
<dbReference type="RefSeq" id="WP_003058229.1">
    <property type="nucleotide sequence ID" value="NC_011992.1"/>
</dbReference>
<dbReference type="SMR" id="B9MEB7"/>
<dbReference type="GeneID" id="84680519"/>
<dbReference type="KEGG" id="dia:Dtpsy_2722"/>
<dbReference type="eggNOG" id="COG0227">
    <property type="taxonomic scope" value="Bacteria"/>
</dbReference>
<dbReference type="HOGENOM" id="CLU_064548_3_1_4"/>
<dbReference type="Proteomes" id="UP000000450">
    <property type="component" value="Chromosome"/>
</dbReference>
<dbReference type="GO" id="GO:0022625">
    <property type="term" value="C:cytosolic large ribosomal subunit"/>
    <property type="evidence" value="ECO:0007669"/>
    <property type="project" value="TreeGrafter"/>
</dbReference>
<dbReference type="GO" id="GO:0003735">
    <property type="term" value="F:structural constituent of ribosome"/>
    <property type="evidence" value="ECO:0007669"/>
    <property type="project" value="InterPro"/>
</dbReference>
<dbReference type="GO" id="GO:0006412">
    <property type="term" value="P:translation"/>
    <property type="evidence" value="ECO:0007669"/>
    <property type="project" value="UniProtKB-UniRule"/>
</dbReference>
<dbReference type="FunFam" id="2.30.170.40:FF:000001">
    <property type="entry name" value="50S ribosomal protein L28"/>
    <property type="match status" value="1"/>
</dbReference>
<dbReference type="Gene3D" id="2.30.170.40">
    <property type="entry name" value="Ribosomal protein L28/L24"/>
    <property type="match status" value="1"/>
</dbReference>
<dbReference type="HAMAP" id="MF_00373">
    <property type="entry name" value="Ribosomal_bL28"/>
    <property type="match status" value="1"/>
</dbReference>
<dbReference type="InterPro" id="IPR026569">
    <property type="entry name" value="Ribosomal_bL28"/>
</dbReference>
<dbReference type="InterPro" id="IPR034704">
    <property type="entry name" value="Ribosomal_bL28/bL31-like_sf"/>
</dbReference>
<dbReference type="InterPro" id="IPR001383">
    <property type="entry name" value="Ribosomal_bL28_bact-type"/>
</dbReference>
<dbReference type="InterPro" id="IPR037147">
    <property type="entry name" value="Ribosomal_bL28_sf"/>
</dbReference>
<dbReference type="NCBIfam" id="TIGR00009">
    <property type="entry name" value="L28"/>
    <property type="match status" value="1"/>
</dbReference>
<dbReference type="PANTHER" id="PTHR13528">
    <property type="entry name" value="39S RIBOSOMAL PROTEIN L28, MITOCHONDRIAL"/>
    <property type="match status" value="1"/>
</dbReference>
<dbReference type="PANTHER" id="PTHR13528:SF2">
    <property type="entry name" value="LARGE RIBOSOMAL SUBUNIT PROTEIN BL28M"/>
    <property type="match status" value="1"/>
</dbReference>
<dbReference type="Pfam" id="PF00830">
    <property type="entry name" value="Ribosomal_L28"/>
    <property type="match status" value="1"/>
</dbReference>
<dbReference type="SUPFAM" id="SSF143800">
    <property type="entry name" value="L28p-like"/>
    <property type="match status" value="1"/>
</dbReference>
<comment type="similarity">
    <text evidence="1">Belongs to the bacterial ribosomal protein bL28 family.</text>
</comment>
<sequence>MARVCEVTGKKPMVGNNVSHANNKTKRRFLPNLQYRRFWVESENRWVRLRVSSAALRLIDKNGIDSVLADMRARGQA</sequence>
<feature type="chain" id="PRO_1000195920" description="Large ribosomal subunit protein bL28">
    <location>
        <begin position="1"/>
        <end position="77"/>
    </location>
</feature>
<keyword id="KW-1185">Reference proteome</keyword>
<keyword id="KW-0687">Ribonucleoprotein</keyword>
<keyword id="KW-0689">Ribosomal protein</keyword>
<reference key="1">
    <citation type="submission" date="2009-01" db="EMBL/GenBank/DDBJ databases">
        <title>Complete sequence of Diaphorobacter sp. TPSY.</title>
        <authorList>
            <consortium name="US DOE Joint Genome Institute"/>
            <person name="Lucas S."/>
            <person name="Copeland A."/>
            <person name="Lapidus A."/>
            <person name="Glavina del Rio T."/>
            <person name="Tice H."/>
            <person name="Bruce D."/>
            <person name="Goodwin L."/>
            <person name="Pitluck S."/>
            <person name="Chertkov O."/>
            <person name="Brettin T."/>
            <person name="Detter J.C."/>
            <person name="Han C."/>
            <person name="Larimer F."/>
            <person name="Land M."/>
            <person name="Hauser L."/>
            <person name="Kyrpides N."/>
            <person name="Mikhailova N."/>
            <person name="Coates J.D."/>
        </authorList>
    </citation>
    <scope>NUCLEOTIDE SEQUENCE [LARGE SCALE GENOMIC DNA]</scope>
    <source>
        <strain>TPSY</strain>
    </source>
</reference>
<accession>B9MEB7</accession>